<dbReference type="EC" id="5.4.99.-"/>
<dbReference type="EMBL" id="AP003614">
    <property type="protein sequence ID" value="BAD53590.1"/>
    <property type="molecule type" value="Genomic_DNA"/>
</dbReference>
<dbReference type="EMBL" id="AP003769">
    <property type="protein sequence ID" value="BAD61720.1"/>
    <property type="molecule type" value="Genomic_DNA"/>
</dbReference>
<dbReference type="EMBL" id="AP008212">
    <property type="protein sequence ID" value="BAF20508.1"/>
    <property type="molecule type" value="Genomic_DNA"/>
</dbReference>
<dbReference type="EMBL" id="AP014962">
    <property type="protein sequence ID" value="BAS99517.1"/>
    <property type="molecule type" value="Genomic_DNA"/>
</dbReference>
<dbReference type="EMBL" id="CM000143">
    <property type="protein sequence ID" value="EEE66368.1"/>
    <property type="molecule type" value="Genomic_DNA"/>
</dbReference>
<dbReference type="EMBL" id="AK072887">
    <property type="protein sequence ID" value="BAG93191.1"/>
    <property type="molecule type" value="mRNA"/>
</dbReference>
<dbReference type="RefSeq" id="XP_015642503.1">
    <property type="nucleotide sequence ID" value="XM_015787017.1"/>
</dbReference>
<dbReference type="SMR" id="Q5Z8P2"/>
<dbReference type="FunCoup" id="Q5Z8P2">
    <property type="interactions" value="270"/>
</dbReference>
<dbReference type="STRING" id="39947.Q5Z8P2"/>
<dbReference type="PaxDb" id="39947-Q5Z8P2"/>
<dbReference type="EnsemblPlants" id="Os06t0717400-01">
    <property type="protein sequence ID" value="Os06t0717400-01"/>
    <property type="gene ID" value="Os06g0717400"/>
</dbReference>
<dbReference type="Gramene" id="Os06t0717400-01">
    <property type="protein sequence ID" value="Os06t0717400-01"/>
    <property type="gene ID" value="Os06g0717400"/>
</dbReference>
<dbReference type="KEGG" id="dosa:Os06g0717400"/>
<dbReference type="eggNOG" id="KOG1919">
    <property type="taxonomic scope" value="Eukaryota"/>
</dbReference>
<dbReference type="HOGENOM" id="CLU_016902_4_3_1"/>
<dbReference type="InParanoid" id="Q5Z8P2"/>
<dbReference type="OMA" id="KSERAYT"/>
<dbReference type="OrthoDB" id="418349at2759"/>
<dbReference type="Proteomes" id="UP000000763">
    <property type="component" value="Chromosome 6"/>
</dbReference>
<dbReference type="Proteomes" id="UP000007752">
    <property type="component" value="Chromosome 6"/>
</dbReference>
<dbReference type="Proteomes" id="UP000059680">
    <property type="component" value="Chromosome 6"/>
</dbReference>
<dbReference type="GO" id="GO:0009507">
    <property type="term" value="C:chloroplast"/>
    <property type="evidence" value="ECO:0007669"/>
    <property type="project" value="UniProtKB-SubCell"/>
</dbReference>
<dbReference type="GO" id="GO:0009982">
    <property type="term" value="F:pseudouridine synthase activity"/>
    <property type="evidence" value="ECO:0000318"/>
    <property type="project" value="GO_Central"/>
</dbReference>
<dbReference type="GO" id="GO:0003723">
    <property type="term" value="F:RNA binding"/>
    <property type="evidence" value="ECO:0007669"/>
    <property type="project" value="UniProtKB-KW"/>
</dbReference>
<dbReference type="GO" id="GO:0000455">
    <property type="term" value="P:enzyme-directed rRNA pseudouridine synthesis"/>
    <property type="evidence" value="ECO:0000318"/>
    <property type="project" value="GO_Central"/>
</dbReference>
<dbReference type="CDD" id="cd02869">
    <property type="entry name" value="PseudoU_synth_RluA_like"/>
    <property type="match status" value="1"/>
</dbReference>
<dbReference type="CDD" id="cd00165">
    <property type="entry name" value="S4"/>
    <property type="match status" value="1"/>
</dbReference>
<dbReference type="FunFam" id="3.10.290.10:FF:000024">
    <property type="entry name" value="RNA pseudouridine synthase 2 chloroplastic"/>
    <property type="match status" value="1"/>
</dbReference>
<dbReference type="Gene3D" id="3.30.2350.10">
    <property type="entry name" value="Pseudouridine synthase"/>
    <property type="match status" value="2"/>
</dbReference>
<dbReference type="Gene3D" id="3.10.290.10">
    <property type="entry name" value="RNA-binding S4 domain"/>
    <property type="match status" value="1"/>
</dbReference>
<dbReference type="InterPro" id="IPR020103">
    <property type="entry name" value="PsdUridine_synth_cat_dom_sf"/>
</dbReference>
<dbReference type="InterPro" id="IPR006224">
    <property type="entry name" value="PsdUridine_synth_RluA-like_CS"/>
</dbReference>
<dbReference type="InterPro" id="IPR006145">
    <property type="entry name" value="PsdUridine_synth_RsuA/RluA"/>
</dbReference>
<dbReference type="InterPro" id="IPR050188">
    <property type="entry name" value="RluA_PseudoU_synthase"/>
</dbReference>
<dbReference type="InterPro" id="IPR002942">
    <property type="entry name" value="S4_RNA-bd"/>
</dbReference>
<dbReference type="InterPro" id="IPR036986">
    <property type="entry name" value="S4_RNA-bd_sf"/>
</dbReference>
<dbReference type="PANTHER" id="PTHR21600">
    <property type="entry name" value="MITOCHONDRIAL RNA PSEUDOURIDINE SYNTHASE"/>
    <property type="match status" value="1"/>
</dbReference>
<dbReference type="PANTHER" id="PTHR21600:SF87">
    <property type="entry name" value="RNA PSEUDOURIDYLATE SYNTHASE DOMAIN-CONTAINING PROTEIN 1"/>
    <property type="match status" value="1"/>
</dbReference>
<dbReference type="Pfam" id="PF00849">
    <property type="entry name" value="PseudoU_synth_2"/>
    <property type="match status" value="1"/>
</dbReference>
<dbReference type="Pfam" id="PF01479">
    <property type="entry name" value="S4"/>
    <property type="match status" value="1"/>
</dbReference>
<dbReference type="SMART" id="SM00363">
    <property type="entry name" value="S4"/>
    <property type="match status" value="1"/>
</dbReference>
<dbReference type="SUPFAM" id="SSF55174">
    <property type="entry name" value="Alpha-L RNA-binding motif"/>
    <property type="match status" value="1"/>
</dbReference>
<dbReference type="SUPFAM" id="SSF55120">
    <property type="entry name" value="Pseudouridine synthase"/>
    <property type="match status" value="1"/>
</dbReference>
<dbReference type="PROSITE" id="PS01129">
    <property type="entry name" value="PSI_RLU"/>
    <property type="match status" value="1"/>
</dbReference>
<dbReference type="PROSITE" id="PS50889">
    <property type="entry name" value="S4"/>
    <property type="match status" value="1"/>
</dbReference>
<proteinExistence type="evidence at transcript level"/>
<organism>
    <name type="scientific">Oryza sativa subsp. japonica</name>
    <name type="common">Rice</name>
    <dbReference type="NCBI Taxonomy" id="39947"/>
    <lineage>
        <taxon>Eukaryota</taxon>
        <taxon>Viridiplantae</taxon>
        <taxon>Streptophyta</taxon>
        <taxon>Embryophyta</taxon>
        <taxon>Tracheophyta</taxon>
        <taxon>Spermatophyta</taxon>
        <taxon>Magnoliopsida</taxon>
        <taxon>Liliopsida</taxon>
        <taxon>Poales</taxon>
        <taxon>Poaceae</taxon>
        <taxon>BOP clade</taxon>
        <taxon>Oryzoideae</taxon>
        <taxon>Oryzeae</taxon>
        <taxon>Oryzinae</taxon>
        <taxon>Oryza</taxon>
        <taxon>Oryza sativa</taxon>
    </lineage>
</organism>
<name>PUS2_ORYSJ</name>
<feature type="transit peptide" description="Chloroplast" evidence="2">
    <location>
        <begin position="1"/>
        <end position="44"/>
    </location>
</feature>
<feature type="chain" id="PRO_0000368023" description="RNA pseudouridine synthase 2, chloroplastic">
    <location>
        <begin position="45"/>
        <end position="445"/>
    </location>
</feature>
<feature type="domain" description="S4 RNA-binding" evidence="3">
    <location>
        <begin position="72"/>
        <end position="147"/>
    </location>
</feature>
<feature type="region of interest" description="Disordered" evidence="4">
    <location>
        <begin position="47"/>
        <end position="66"/>
    </location>
</feature>
<feature type="active site" evidence="1">
    <location>
        <position position="235"/>
    </location>
</feature>
<comment type="catalytic activity">
    <reaction>
        <text>a uridine in RNA = a pseudouridine in RNA</text>
        <dbReference type="Rhea" id="RHEA:48348"/>
        <dbReference type="Rhea" id="RHEA-COMP:12068"/>
        <dbReference type="Rhea" id="RHEA-COMP:12069"/>
        <dbReference type="ChEBI" id="CHEBI:65314"/>
        <dbReference type="ChEBI" id="CHEBI:65315"/>
    </reaction>
</comment>
<comment type="subcellular location">
    <subcellularLocation>
        <location evidence="5">Plastid</location>
        <location evidence="5">Chloroplast</location>
    </subcellularLocation>
</comment>
<comment type="similarity">
    <text evidence="5">Belongs to the pseudouridine synthase RluA family.</text>
</comment>
<sequence length="445" mass="47839">MATTAAASPPAIATALSALLRRQRRRSSRCVGASHARCLAADANAEAVAPSRRGGHGGTRLEEAVPAGEGRSRIDAWISARLGGGGVSRARIQASIRAGLVVVNGRPVSKVSHMVKGGDIVSCTVLELQPLRAEPEDIPLDIVYEDDHLLVVNKPAHMVVHPAPGNANGTLVNAILHHCKISTFTCLARNSIDDECPDSSDDDIDVFDIDQFTTGEVSSEVREALVRPGIVHRLDKGTSGLLVVAKDEHSHAQLAEQFKLHTIRRVYISLTCGAPNPNSGRIEVPIARDPNNRIRMIATPGSGHRYARHAASRYKVREVFAGGGSALVEWRLETGRTHQIRAHAKYLGIPLLGDETYGGTKSMALSLLRPRTPSRYHCDLSNMISKIDRPCLHAALLGFKHPHSGKILEFSCPPPDDFTEVLNELHQVTLASNGNSGGGVARICD</sequence>
<protein>
    <recommendedName>
        <fullName>RNA pseudouridine synthase 2, chloroplastic</fullName>
        <ecNumber>5.4.99.-</ecNumber>
    </recommendedName>
    <alternativeName>
        <fullName>RNA pseudouridylate synthase 2</fullName>
    </alternativeName>
    <alternativeName>
        <fullName>RNA-uridine isomerase 2</fullName>
    </alternativeName>
</protein>
<accession>Q5Z8P2</accession>
<accession>A0A0P0X198</accession>
<evidence type="ECO:0000250" key="1"/>
<evidence type="ECO:0000255" key="2"/>
<evidence type="ECO:0000255" key="3">
    <source>
        <dbReference type="PROSITE-ProRule" id="PRU00182"/>
    </source>
</evidence>
<evidence type="ECO:0000256" key="4">
    <source>
        <dbReference type="SAM" id="MobiDB-lite"/>
    </source>
</evidence>
<evidence type="ECO:0000305" key="5"/>
<gene>
    <name type="ordered locus">Os06g0717400</name>
    <name type="ordered locus">LOC_Os06g50360</name>
    <name type="ORF">OsJ_22675</name>
    <name type="ORF">P0481E08.45</name>
    <name type="ORF">P0541C02.12</name>
</gene>
<reference key="1">
    <citation type="journal article" date="2005" name="Nature">
        <title>The map-based sequence of the rice genome.</title>
        <authorList>
            <consortium name="International rice genome sequencing project (IRGSP)"/>
        </authorList>
    </citation>
    <scope>NUCLEOTIDE SEQUENCE [LARGE SCALE GENOMIC DNA]</scope>
    <source>
        <strain>cv. Nipponbare</strain>
    </source>
</reference>
<reference key="2">
    <citation type="journal article" date="2008" name="Nucleic Acids Res.">
        <title>The rice annotation project database (RAP-DB): 2008 update.</title>
        <authorList>
            <consortium name="The rice annotation project (RAP)"/>
        </authorList>
    </citation>
    <scope>GENOME REANNOTATION</scope>
    <source>
        <strain>cv. Nipponbare</strain>
    </source>
</reference>
<reference key="3">
    <citation type="journal article" date="2013" name="Rice">
        <title>Improvement of the Oryza sativa Nipponbare reference genome using next generation sequence and optical map data.</title>
        <authorList>
            <person name="Kawahara Y."/>
            <person name="de la Bastide M."/>
            <person name="Hamilton J.P."/>
            <person name="Kanamori H."/>
            <person name="McCombie W.R."/>
            <person name="Ouyang S."/>
            <person name="Schwartz D.C."/>
            <person name="Tanaka T."/>
            <person name="Wu J."/>
            <person name="Zhou S."/>
            <person name="Childs K.L."/>
            <person name="Davidson R.M."/>
            <person name="Lin H."/>
            <person name="Quesada-Ocampo L."/>
            <person name="Vaillancourt B."/>
            <person name="Sakai H."/>
            <person name="Lee S.S."/>
            <person name="Kim J."/>
            <person name="Numa H."/>
            <person name="Itoh T."/>
            <person name="Buell C.R."/>
            <person name="Matsumoto T."/>
        </authorList>
    </citation>
    <scope>GENOME REANNOTATION</scope>
    <source>
        <strain>cv. Nipponbare</strain>
    </source>
</reference>
<reference key="4">
    <citation type="journal article" date="2005" name="PLoS Biol.">
        <title>The genomes of Oryza sativa: a history of duplications.</title>
        <authorList>
            <person name="Yu J."/>
            <person name="Wang J."/>
            <person name="Lin W."/>
            <person name="Li S."/>
            <person name="Li H."/>
            <person name="Zhou J."/>
            <person name="Ni P."/>
            <person name="Dong W."/>
            <person name="Hu S."/>
            <person name="Zeng C."/>
            <person name="Zhang J."/>
            <person name="Zhang Y."/>
            <person name="Li R."/>
            <person name="Xu Z."/>
            <person name="Li S."/>
            <person name="Li X."/>
            <person name="Zheng H."/>
            <person name="Cong L."/>
            <person name="Lin L."/>
            <person name="Yin J."/>
            <person name="Geng J."/>
            <person name="Li G."/>
            <person name="Shi J."/>
            <person name="Liu J."/>
            <person name="Lv H."/>
            <person name="Li J."/>
            <person name="Wang J."/>
            <person name="Deng Y."/>
            <person name="Ran L."/>
            <person name="Shi X."/>
            <person name="Wang X."/>
            <person name="Wu Q."/>
            <person name="Li C."/>
            <person name="Ren X."/>
            <person name="Wang J."/>
            <person name="Wang X."/>
            <person name="Li D."/>
            <person name="Liu D."/>
            <person name="Zhang X."/>
            <person name="Ji Z."/>
            <person name="Zhao W."/>
            <person name="Sun Y."/>
            <person name="Zhang Z."/>
            <person name="Bao J."/>
            <person name="Han Y."/>
            <person name="Dong L."/>
            <person name="Ji J."/>
            <person name="Chen P."/>
            <person name="Wu S."/>
            <person name="Liu J."/>
            <person name="Xiao Y."/>
            <person name="Bu D."/>
            <person name="Tan J."/>
            <person name="Yang L."/>
            <person name="Ye C."/>
            <person name="Zhang J."/>
            <person name="Xu J."/>
            <person name="Zhou Y."/>
            <person name="Yu Y."/>
            <person name="Zhang B."/>
            <person name="Zhuang S."/>
            <person name="Wei H."/>
            <person name="Liu B."/>
            <person name="Lei M."/>
            <person name="Yu H."/>
            <person name="Li Y."/>
            <person name="Xu H."/>
            <person name="Wei S."/>
            <person name="He X."/>
            <person name="Fang L."/>
            <person name="Zhang Z."/>
            <person name="Zhang Y."/>
            <person name="Huang X."/>
            <person name="Su Z."/>
            <person name="Tong W."/>
            <person name="Li J."/>
            <person name="Tong Z."/>
            <person name="Li S."/>
            <person name="Ye J."/>
            <person name="Wang L."/>
            <person name="Fang L."/>
            <person name="Lei T."/>
            <person name="Chen C.-S."/>
            <person name="Chen H.-C."/>
            <person name="Xu Z."/>
            <person name="Li H."/>
            <person name="Huang H."/>
            <person name="Zhang F."/>
            <person name="Xu H."/>
            <person name="Li N."/>
            <person name="Zhao C."/>
            <person name="Li S."/>
            <person name="Dong L."/>
            <person name="Huang Y."/>
            <person name="Li L."/>
            <person name="Xi Y."/>
            <person name="Qi Q."/>
            <person name="Li W."/>
            <person name="Zhang B."/>
            <person name="Hu W."/>
            <person name="Zhang Y."/>
            <person name="Tian X."/>
            <person name="Jiao Y."/>
            <person name="Liang X."/>
            <person name="Jin J."/>
            <person name="Gao L."/>
            <person name="Zheng W."/>
            <person name="Hao B."/>
            <person name="Liu S.-M."/>
            <person name="Wang W."/>
            <person name="Yuan L."/>
            <person name="Cao M."/>
            <person name="McDermott J."/>
            <person name="Samudrala R."/>
            <person name="Wang J."/>
            <person name="Wong G.K.-S."/>
            <person name="Yang H."/>
        </authorList>
    </citation>
    <scope>NUCLEOTIDE SEQUENCE [LARGE SCALE GENOMIC DNA]</scope>
    <source>
        <strain>cv. Nipponbare</strain>
    </source>
</reference>
<reference key="5">
    <citation type="journal article" date="2003" name="Science">
        <title>Collection, mapping, and annotation of over 28,000 cDNA clones from japonica rice.</title>
        <authorList>
            <consortium name="The rice full-length cDNA consortium"/>
        </authorList>
    </citation>
    <scope>NUCLEOTIDE SEQUENCE [LARGE SCALE MRNA]</scope>
    <source>
        <strain>cv. Nipponbare</strain>
    </source>
</reference>
<keyword id="KW-0150">Chloroplast</keyword>
<keyword id="KW-0413">Isomerase</keyword>
<keyword id="KW-0934">Plastid</keyword>
<keyword id="KW-1185">Reference proteome</keyword>
<keyword id="KW-0694">RNA-binding</keyword>
<keyword id="KW-0809">Transit peptide</keyword>